<comment type="function">
    <text evidence="1">Involved in peptide bond synthesis. Stimulates efficient translation and peptide-bond synthesis on native or reconstituted 70S ribosomes in vitro. Probably functions indirectly by altering the affinity of the ribosome for aminoacyl-tRNA, thus increasing their reactivity as acceptors for peptidyl transferase.</text>
</comment>
<comment type="pathway">
    <text evidence="1">Protein biosynthesis; polypeptide chain elongation.</text>
</comment>
<comment type="subcellular location">
    <subcellularLocation>
        <location evidence="1">Cytoplasm</location>
    </subcellularLocation>
</comment>
<comment type="similarity">
    <text evidence="1">Belongs to the elongation factor P family.</text>
</comment>
<keyword id="KW-0963">Cytoplasm</keyword>
<keyword id="KW-0251">Elongation factor</keyword>
<keyword id="KW-0648">Protein biosynthesis</keyword>
<feature type="chain" id="PRO_1000010763" description="Elongation factor P">
    <location>
        <begin position="1"/>
        <end position="191"/>
    </location>
</feature>
<proteinExistence type="inferred from homology"/>
<dbReference type="EMBL" id="CP000269">
    <property type="protein sequence ID" value="ABR90261.1"/>
    <property type="molecule type" value="Genomic_DNA"/>
</dbReference>
<dbReference type="RefSeq" id="WP_012078983.1">
    <property type="nucleotide sequence ID" value="NC_009659.1"/>
</dbReference>
<dbReference type="SMR" id="A6SX19"/>
<dbReference type="STRING" id="375286.mma_1126"/>
<dbReference type="KEGG" id="mms:mma_1126"/>
<dbReference type="eggNOG" id="COG0231">
    <property type="taxonomic scope" value="Bacteria"/>
</dbReference>
<dbReference type="HOGENOM" id="CLU_074944_2_1_4"/>
<dbReference type="OrthoDB" id="9801844at2"/>
<dbReference type="UniPathway" id="UPA00345"/>
<dbReference type="Proteomes" id="UP000006388">
    <property type="component" value="Chromosome"/>
</dbReference>
<dbReference type="GO" id="GO:0005737">
    <property type="term" value="C:cytoplasm"/>
    <property type="evidence" value="ECO:0007669"/>
    <property type="project" value="UniProtKB-SubCell"/>
</dbReference>
<dbReference type="GO" id="GO:0003746">
    <property type="term" value="F:translation elongation factor activity"/>
    <property type="evidence" value="ECO:0007669"/>
    <property type="project" value="UniProtKB-UniRule"/>
</dbReference>
<dbReference type="GO" id="GO:0043043">
    <property type="term" value="P:peptide biosynthetic process"/>
    <property type="evidence" value="ECO:0007669"/>
    <property type="project" value="InterPro"/>
</dbReference>
<dbReference type="CDD" id="cd04470">
    <property type="entry name" value="S1_EF-P_repeat_1"/>
    <property type="match status" value="1"/>
</dbReference>
<dbReference type="FunFam" id="2.40.50.140:FF:000004">
    <property type="entry name" value="Elongation factor P"/>
    <property type="match status" value="1"/>
</dbReference>
<dbReference type="FunFam" id="2.40.50.140:FF:000009">
    <property type="entry name" value="Elongation factor P"/>
    <property type="match status" value="1"/>
</dbReference>
<dbReference type="Gene3D" id="2.30.30.30">
    <property type="match status" value="1"/>
</dbReference>
<dbReference type="Gene3D" id="2.40.50.140">
    <property type="entry name" value="Nucleic acid-binding proteins"/>
    <property type="match status" value="2"/>
</dbReference>
<dbReference type="HAMAP" id="MF_00141">
    <property type="entry name" value="EF_P"/>
    <property type="match status" value="1"/>
</dbReference>
<dbReference type="InterPro" id="IPR015365">
    <property type="entry name" value="Elong-fact-P_C"/>
</dbReference>
<dbReference type="InterPro" id="IPR012340">
    <property type="entry name" value="NA-bd_OB-fold"/>
</dbReference>
<dbReference type="InterPro" id="IPR014722">
    <property type="entry name" value="Rib_uL2_dom2"/>
</dbReference>
<dbReference type="InterPro" id="IPR020599">
    <property type="entry name" value="Transl_elong_fac_P/YeiP"/>
</dbReference>
<dbReference type="InterPro" id="IPR013185">
    <property type="entry name" value="Transl_elong_KOW-like"/>
</dbReference>
<dbReference type="InterPro" id="IPR001059">
    <property type="entry name" value="Transl_elong_P/YeiP_cen"/>
</dbReference>
<dbReference type="InterPro" id="IPR011768">
    <property type="entry name" value="Transl_elongation_fac_P"/>
</dbReference>
<dbReference type="InterPro" id="IPR008991">
    <property type="entry name" value="Translation_prot_SH3-like_sf"/>
</dbReference>
<dbReference type="NCBIfam" id="NF001810">
    <property type="entry name" value="PRK00529.1"/>
    <property type="match status" value="1"/>
</dbReference>
<dbReference type="PANTHER" id="PTHR30053">
    <property type="entry name" value="ELONGATION FACTOR P"/>
    <property type="match status" value="1"/>
</dbReference>
<dbReference type="PANTHER" id="PTHR30053:SF12">
    <property type="entry name" value="ELONGATION FACTOR P (EF-P) FAMILY PROTEIN"/>
    <property type="match status" value="1"/>
</dbReference>
<dbReference type="Pfam" id="PF01132">
    <property type="entry name" value="EFP"/>
    <property type="match status" value="1"/>
</dbReference>
<dbReference type="Pfam" id="PF08207">
    <property type="entry name" value="EFP_N"/>
    <property type="match status" value="1"/>
</dbReference>
<dbReference type="Pfam" id="PF09285">
    <property type="entry name" value="Elong-fact-P_C"/>
    <property type="match status" value="1"/>
</dbReference>
<dbReference type="PIRSF" id="PIRSF005901">
    <property type="entry name" value="EF-P"/>
    <property type="match status" value="1"/>
</dbReference>
<dbReference type="SMART" id="SM01185">
    <property type="entry name" value="EFP"/>
    <property type="match status" value="1"/>
</dbReference>
<dbReference type="SMART" id="SM00841">
    <property type="entry name" value="Elong-fact-P_C"/>
    <property type="match status" value="1"/>
</dbReference>
<dbReference type="SUPFAM" id="SSF50249">
    <property type="entry name" value="Nucleic acid-binding proteins"/>
    <property type="match status" value="2"/>
</dbReference>
<dbReference type="SUPFAM" id="SSF50104">
    <property type="entry name" value="Translation proteins SH3-like domain"/>
    <property type="match status" value="1"/>
</dbReference>
<evidence type="ECO:0000255" key="1">
    <source>
        <dbReference type="HAMAP-Rule" id="MF_00141"/>
    </source>
</evidence>
<sequence length="191" mass="21881">MKPAKEIRVGNIIMVDSKPMIVLRSDVNGSSRTGFTYKWKMKNLLTNTPMENVFRGDDKFDVVVLDKKPVTYSYFADPLYVFMDEEYNQYEIEEENLGDALHYLKDGMECEAVFYDGKAISVELPITIARQVVYSEPAVKGNTSGNVLKEAKIENAVEAHRHTVQVPLFVSQDDVIEIDTRTNEYKRVVRN</sequence>
<name>EFP_JANMA</name>
<gene>
    <name evidence="1" type="primary">efp</name>
    <name type="ordered locus">mma_1126</name>
</gene>
<reference key="1">
    <citation type="journal article" date="2007" name="PLoS Genet.">
        <title>Genome analysis of Minibacterium massiliensis highlights the convergent evolution of water-living bacteria.</title>
        <authorList>
            <person name="Audic S."/>
            <person name="Robert C."/>
            <person name="Campagna B."/>
            <person name="Parinello H."/>
            <person name="Claverie J.-M."/>
            <person name="Raoult D."/>
            <person name="Drancourt M."/>
        </authorList>
    </citation>
    <scope>NUCLEOTIDE SEQUENCE [LARGE SCALE GENOMIC DNA]</scope>
    <source>
        <strain>Marseille</strain>
    </source>
</reference>
<protein>
    <recommendedName>
        <fullName evidence="1">Elongation factor P</fullName>
        <shortName evidence="1">EF-P</shortName>
    </recommendedName>
</protein>
<organism>
    <name type="scientific">Janthinobacterium sp. (strain Marseille)</name>
    <name type="common">Minibacterium massiliensis</name>
    <dbReference type="NCBI Taxonomy" id="375286"/>
    <lineage>
        <taxon>Bacteria</taxon>
        <taxon>Pseudomonadati</taxon>
        <taxon>Pseudomonadota</taxon>
        <taxon>Betaproteobacteria</taxon>
        <taxon>Burkholderiales</taxon>
        <taxon>Oxalobacteraceae</taxon>
        <taxon>Janthinobacterium</taxon>
    </lineage>
</organism>
<accession>A6SX19</accession>